<dbReference type="EMBL" id="ADVS01000029">
    <property type="protein sequence ID" value="EGA74583.1"/>
    <property type="status" value="ALT_INIT"/>
    <property type="molecule type" value="Genomic_DNA"/>
</dbReference>
<dbReference type="SMR" id="E7KDM2"/>
<dbReference type="HOGENOM" id="CLU_594765_0_0_1"/>
<dbReference type="OrthoDB" id="5976022at2759"/>
<dbReference type="GO" id="GO:0005737">
    <property type="term" value="C:cytoplasm"/>
    <property type="evidence" value="ECO:0007669"/>
    <property type="project" value="TreeGrafter"/>
</dbReference>
<dbReference type="GO" id="GO:0031588">
    <property type="term" value="C:nucleotide-activated protein kinase complex"/>
    <property type="evidence" value="ECO:0007669"/>
    <property type="project" value="TreeGrafter"/>
</dbReference>
<dbReference type="GO" id="GO:0005634">
    <property type="term" value="C:nucleus"/>
    <property type="evidence" value="ECO:0007669"/>
    <property type="project" value="TreeGrafter"/>
</dbReference>
<dbReference type="GO" id="GO:0003677">
    <property type="term" value="F:DNA binding"/>
    <property type="evidence" value="ECO:0007669"/>
    <property type="project" value="UniProtKB-KW"/>
</dbReference>
<dbReference type="GO" id="GO:0019901">
    <property type="term" value="F:protein kinase binding"/>
    <property type="evidence" value="ECO:0007669"/>
    <property type="project" value="TreeGrafter"/>
</dbReference>
<dbReference type="GO" id="GO:0007165">
    <property type="term" value="P:signal transduction"/>
    <property type="evidence" value="ECO:0007669"/>
    <property type="project" value="TreeGrafter"/>
</dbReference>
<dbReference type="CDD" id="cd02859">
    <property type="entry name" value="E_set_AMPKbeta_like_N"/>
    <property type="match status" value="1"/>
</dbReference>
<dbReference type="FunFam" id="2.60.40.10:FF:001765">
    <property type="entry name" value="Cruciform DNA-recognizing protein 1"/>
    <property type="match status" value="1"/>
</dbReference>
<dbReference type="Gene3D" id="2.60.40.10">
    <property type="entry name" value="Immunoglobulins"/>
    <property type="match status" value="1"/>
</dbReference>
<dbReference type="InterPro" id="IPR032640">
    <property type="entry name" value="AMPK1_CBM"/>
</dbReference>
<dbReference type="InterPro" id="IPR050827">
    <property type="entry name" value="CRP1_MDG1_kinase"/>
</dbReference>
<dbReference type="InterPro" id="IPR013783">
    <property type="entry name" value="Ig-like_fold"/>
</dbReference>
<dbReference type="InterPro" id="IPR014756">
    <property type="entry name" value="Ig_E-set"/>
</dbReference>
<dbReference type="PANTHER" id="PTHR10343">
    <property type="entry name" value="5'-AMP-ACTIVATED PROTEIN KINASE , BETA SUBUNIT"/>
    <property type="match status" value="1"/>
</dbReference>
<dbReference type="PANTHER" id="PTHR10343:SF81">
    <property type="entry name" value="CRUCIFORM DNA-RECOGNIZING PROTEIN 1-RELATED"/>
    <property type="match status" value="1"/>
</dbReference>
<dbReference type="Pfam" id="PF16561">
    <property type="entry name" value="AMPK1_CBM"/>
    <property type="match status" value="1"/>
</dbReference>
<dbReference type="SUPFAM" id="SSF81296">
    <property type="entry name" value="E set domains"/>
    <property type="match status" value="1"/>
</dbReference>
<reference key="1">
    <citation type="journal article" date="2011" name="PLoS Genet.">
        <title>Whole-genome comparison reveals novel genetic elements that characterize the genome of industrial strains of Saccharomyces cerevisiae.</title>
        <authorList>
            <person name="Borneman A.R."/>
            <person name="Desany B.A."/>
            <person name="Riches D."/>
            <person name="Affourtit J.P."/>
            <person name="Forgan A.H."/>
            <person name="Pretorius I.S."/>
            <person name="Egholm M."/>
            <person name="Chambers P.J."/>
        </authorList>
    </citation>
    <scope>NUCLEOTIDE SEQUENCE [LARGE SCALE GENOMIC DNA]</scope>
    <source>
        <strain>AWRI796</strain>
    </source>
</reference>
<protein>
    <recommendedName>
        <fullName>Cruciform DNA-recognizing protein 1</fullName>
    </recommendedName>
    <component>
        <recommendedName>
            <fullName>CRP1 short N-terminal subpeptide</fullName>
        </recommendedName>
    </component>
    <component>
        <recommendedName>
            <fullName>CRP1 short C-terminal subpeptide</fullName>
        </recommendedName>
    </component>
</protein>
<sequence>MSSELMFNYTFSWPAGPKDVILTGTFDDWRGTLPLVKTAKGNFEITMPVKLANKDDTFQFKFIVDGVWCVSDSYKKEHVSEGIENNFLQITDLVETQEVAGASRIPEAGGLLCGKPPRSAGPPSTSNRKKNKRNNKKRRSKLKKKSTKNNKKSNESLDDNEEEDGVTGTTTEDVTGTSREETPLAEPTNVSKEAPGNFHILPIDQSADTTQSNGIIGGPGPVLVPNPGEIKEFTEIRDVDARELNERLNKKEEVPEPVAGPIVESSVTEKSPALPQADDPIVETKEVAHNVQELTPQVEAVTPLINEPEPLPTPEAQISIPESTKVEPVEGSLQSKLVEKRESTEGVLDGSKKVENKAKKDEEVFTLDPIVNKAPKLPLTDEQTAEGRKSPAVSEEKEKKKKQEKGSKEVKRSETSKEKKPSAKEVKKQTVKASKKQTASPLSSSTEEPKKKKTGFFGKLKKLFK</sequence>
<proteinExistence type="inferred from homology"/>
<organism>
    <name type="scientific">Saccharomyces cerevisiae (strain AWRI796)</name>
    <name type="common">Baker's yeast</name>
    <dbReference type="NCBI Taxonomy" id="764097"/>
    <lineage>
        <taxon>Eukaryota</taxon>
        <taxon>Fungi</taxon>
        <taxon>Dikarya</taxon>
        <taxon>Ascomycota</taxon>
        <taxon>Saccharomycotina</taxon>
        <taxon>Saccharomycetes</taxon>
        <taxon>Saccharomycetales</taxon>
        <taxon>Saccharomycetaceae</taxon>
        <taxon>Saccharomyces</taxon>
    </lineage>
</organism>
<evidence type="ECO:0000250" key="1"/>
<evidence type="ECO:0000250" key="2">
    <source>
        <dbReference type="UniProtKB" id="P38845"/>
    </source>
</evidence>
<evidence type="ECO:0000256" key="3">
    <source>
        <dbReference type="SAM" id="MobiDB-lite"/>
    </source>
</evidence>
<evidence type="ECO:0000305" key="4"/>
<comment type="function">
    <text evidence="1">Cruciform DNA-binding protein which exerts an enhancing effect on the cleavage of cruciform DNA (X-DNA) by endonuclease VII from bacteriophage T4.</text>
</comment>
<comment type="PTM">
    <text evidence="1">Cleaved in the vicinity of position 160 to give an X-DNA-binding N-terminal subpeptide and a non-DNA-binding C-terminal subpeptide.</text>
</comment>
<comment type="similarity">
    <text evidence="4">Belongs to the CRP1/MDG1 family.</text>
</comment>
<comment type="sequence caution" evidence="4">
    <conflict type="erroneous initiation">
        <sequence resource="EMBL-CDS" id="EGA74583"/>
    </conflict>
    <text>Truncated N-terminus.</text>
</comment>
<gene>
    <name type="primary">CRP1</name>
    <name type="ORF">AWRI796_2206</name>
</gene>
<feature type="chain" id="PRO_0000409608" description="Cruciform DNA-recognizing protein 1">
    <location>
        <begin position="1"/>
        <end position="465"/>
    </location>
</feature>
<feature type="chain" id="PRO_0000409609" description="CRP1 short N-terminal subpeptide" evidence="1">
    <location>
        <begin position="1"/>
        <end position="160"/>
    </location>
</feature>
<feature type="chain" id="PRO_0000409610" description="CRP1 short C-terminal subpeptide" evidence="1">
    <location>
        <begin position="161"/>
        <end position="465"/>
    </location>
</feature>
<feature type="region of interest" description="Disordered" evidence="3">
    <location>
        <begin position="107"/>
        <end position="227"/>
    </location>
</feature>
<feature type="region of interest" description="X-DNA-binding" evidence="1">
    <location>
        <begin position="160"/>
        <end position="161"/>
    </location>
</feature>
<feature type="region of interest" description="Disordered" evidence="3">
    <location>
        <begin position="247"/>
        <end position="276"/>
    </location>
</feature>
<feature type="region of interest" description="Disordered" evidence="3">
    <location>
        <begin position="298"/>
        <end position="465"/>
    </location>
</feature>
<feature type="compositionally biased region" description="Basic residues" evidence="3">
    <location>
        <begin position="127"/>
        <end position="151"/>
    </location>
</feature>
<feature type="compositionally biased region" description="Acidic residues" evidence="3">
    <location>
        <begin position="156"/>
        <end position="165"/>
    </location>
</feature>
<feature type="compositionally biased region" description="Low complexity" evidence="3">
    <location>
        <begin position="166"/>
        <end position="177"/>
    </location>
</feature>
<feature type="compositionally biased region" description="Basic and acidic residues" evidence="3">
    <location>
        <begin position="337"/>
        <end position="363"/>
    </location>
</feature>
<feature type="compositionally biased region" description="Basic and acidic residues" evidence="3">
    <location>
        <begin position="385"/>
        <end position="398"/>
    </location>
</feature>
<feature type="compositionally biased region" description="Basic and acidic residues" evidence="3">
    <location>
        <begin position="404"/>
        <end position="428"/>
    </location>
</feature>
<feature type="compositionally biased region" description="Basic residues" evidence="3">
    <location>
        <begin position="451"/>
        <end position="465"/>
    </location>
</feature>
<feature type="modified residue" description="Phosphoserine" evidence="2">
    <location>
        <position position="153"/>
    </location>
</feature>
<feature type="modified residue" description="Phosphoserine" evidence="2">
    <location>
        <position position="156"/>
    </location>
</feature>
<feature type="modified residue" description="Phosphothreonine" evidence="2">
    <location>
        <position position="182"/>
    </location>
</feature>
<feature type="modified residue" description="Phosphoserine" evidence="2">
    <location>
        <position position="271"/>
    </location>
</feature>
<feature type="modified residue" description="Phosphothreonine" evidence="2">
    <location>
        <position position="295"/>
    </location>
</feature>
<feature type="modified residue" description="Phosphoserine" evidence="2">
    <location>
        <position position="319"/>
    </location>
</feature>
<feature type="modified residue" description="Phosphoserine" evidence="2">
    <location>
        <position position="343"/>
    </location>
</feature>
<feature type="modified residue" description="Phosphothreonine" evidence="2">
    <location>
        <position position="366"/>
    </location>
</feature>
<feature type="modified residue" description="Phosphoserine" evidence="2">
    <location>
        <position position="394"/>
    </location>
</feature>
<feature type="modified residue" description="Phosphoserine" evidence="2">
    <location>
        <position position="440"/>
    </location>
</feature>
<name>CRP1_YEASA</name>
<accession>E7KDM2</accession>
<keyword id="KW-0238">DNA-binding</keyword>
<keyword id="KW-0597">Phosphoprotein</keyword>